<evidence type="ECO:0000250" key="1">
    <source>
        <dbReference type="UniProtKB" id="P01942"/>
    </source>
</evidence>
<evidence type="ECO:0000250" key="2">
    <source>
        <dbReference type="UniProtKB" id="P01946"/>
    </source>
</evidence>
<evidence type="ECO:0000250" key="3">
    <source>
        <dbReference type="UniProtKB" id="P69905"/>
    </source>
</evidence>
<evidence type="ECO:0000255" key="4">
    <source>
        <dbReference type="PROSITE-ProRule" id="PRU00238"/>
    </source>
</evidence>
<dbReference type="PIR" id="JU0165">
    <property type="entry name" value="JU0165"/>
</dbReference>
<dbReference type="SMR" id="P11750"/>
<dbReference type="Proteomes" id="UP000694417">
    <property type="component" value="Unplaced"/>
</dbReference>
<dbReference type="GO" id="GO:0072562">
    <property type="term" value="C:blood microparticle"/>
    <property type="evidence" value="ECO:0007669"/>
    <property type="project" value="TreeGrafter"/>
</dbReference>
<dbReference type="GO" id="GO:0031838">
    <property type="term" value="C:haptoglobin-hemoglobin complex"/>
    <property type="evidence" value="ECO:0007669"/>
    <property type="project" value="TreeGrafter"/>
</dbReference>
<dbReference type="GO" id="GO:0005833">
    <property type="term" value="C:hemoglobin complex"/>
    <property type="evidence" value="ECO:0007669"/>
    <property type="project" value="InterPro"/>
</dbReference>
<dbReference type="GO" id="GO:0031720">
    <property type="term" value="F:haptoglobin binding"/>
    <property type="evidence" value="ECO:0007669"/>
    <property type="project" value="TreeGrafter"/>
</dbReference>
<dbReference type="GO" id="GO:0020037">
    <property type="term" value="F:heme binding"/>
    <property type="evidence" value="ECO:0007669"/>
    <property type="project" value="InterPro"/>
</dbReference>
<dbReference type="GO" id="GO:0005506">
    <property type="term" value="F:iron ion binding"/>
    <property type="evidence" value="ECO:0007669"/>
    <property type="project" value="InterPro"/>
</dbReference>
<dbReference type="GO" id="GO:0043177">
    <property type="term" value="F:organic acid binding"/>
    <property type="evidence" value="ECO:0007669"/>
    <property type="project" value="TreeGrafter"/>
</dbReference>
<dbReference type="GO" id="GO:0019825">
    <property type="term" value="F:oxygen binding"/>
    <property type="evidence" value="ECO:0007669"/>
    <property type="project" value="InterPro"/>
</dbReference>
<dbReference type="GO" id="GO:0005344">
    <property type="term" value="F:oxygen carrier activity"/>
    <property type="evidence" value="ECO:0007669"/>
    <property type="project" value="UniProtKB-KW"/>
</dbReference>
<dbReference type="GO" id="GO:0004601">
    <property type="term" value="F:peroxidase activity"/>
    <property type="evidence" value="ECO:0007669"/>
    <property type="project" value="TreeGrafter"/>
</dbReference>
<dbReference type="GO" id="GO:0042744">
    <property type="term" value="P:hydrogen peroxide catabolic process"/>
    <property type="evidence" value="ECO:0007669"/>
    <property type="project" value="TreeGrafter"/>
</dbReference>
<dbReference type="CDD" id="cd08927">
    <property type="entry name" value="Hb-alpha-like"/>
    <property type="match status" value="1"/>
</dbReference>
<dbReference type="FunFam" id="1.10.490.10:FF:000002">
    <property type="entry name" value="Hemoglobin subunit alpha"/>
    <property type="match status" value="1"/>
</dbReference>
<dbReference type="Gene3D" id="1.10.490.10">
    <property type="entry name" value="Globins"/>
    <property type="match status" value="1"/>
</dbReference>
<dbReference type="InterPro" id="IPR000971">
    <property type="entry name" value="Globin"/>
</dbReference>
<dbReference type="InterPro" id="IPR009050">
    <property type="entry name" value="Globin-like_sf"/>
</dbReference>
<dbReference type="InterPro" id="IPR012292">
    <property type="entry name" value="Globin/Proto"/>
</dbReference>
<dbReference type="InterPro" id="IPR002338">
    <property type="entry name" value="Hemoglobin_a-typ"/>
</dbReference>
<dbReference type="InterPro" id="IPR050056">
    <property type="entry name" value="Hemoglobin_oxygen_transport"/>
</dbReference>
<dbReference type="InterPro" id="IPR002339">
    <property type="entry name" value="Hemoglobin_pi"/>
</dbReference>
<dbReference type="PANTHER" id="PTHR11442">
    <property type="entry name" value="HEMOGLOBIN FAMILY MEMBER"/>
    <property type="match status" value="1"/>
</dbReference>
<dbReference type="PANTHER" id="PTHR11442:SF48">
    <property type="entry name" value="HEMOGLOBIN SUBUNIT ALPHA"/>
    <property type="match status" value="1"/>
</dbReference>
<dbReference type="Pfam" id="PF00042">
    <property type="entry name" value="Globin"/>
    <property type="match status" value="1"/>
</dbReference>
<dbReference type="PRINTS" id="PR00612">
    <property type="entry name" value="ALPHAHAEM"/>
</dbReference>
<dbReference type="PRINTS" id="PR00815">
    <property type="entry name" value="PIHAEM"/>
</dbReference>
<dbReference type="SUPFAM" id="SSF46458">
    <property type="entry name" value="Globin-like"/>
    <property type="match status" value="1"/>
</dbReference>
<dbReference type="PROSITE" id="PS01033">
    <property type="entry name" value="GLOBIN"/>
    <property type="match status" value="1"/>
</dbReference>
<name>HBA_UROPR</name>
<protein>
    <recommendedName>
        <fullName>Hemoglobin subunit alpha</fullName>
    </recommendedName>
    <alternativeName>
        <fullName>Alpha-globin</fullName>
    </alternativeName>
    <alternativeName>
        <fullName>Hemoglobin alpha chain</fullName>
    </alternativeName>
    <component>
        <recommendedName>
            <fullName evidence="2">Hemopressin</fullName>
        </recommendedName>
    </component>
</protein>
<proteinExistence type="evidence at protein level"/>
<accession>P11750</accession>
<sequence>VLSPADKTNVKASWEKIGGHGAAYGAEALERMFLSFPTTKTYFPHFDLSHGSAQVQGHGKKVADALANAAAHVDDLPGALSALSDLHAHKLRVDPVNFKLLSHCLLVTLAAHHPAEFTPAVHASLDKFLASVSTVLTSKYR</sequence>
<organism>
    <name type="scientific">Urocitellus parryii</name>
    <name type="common">Arctic ground squirrel</name>
    <name type="synonym">Spermophilus parryii</name>
    <dbReference type="NCBI Taxonomy" id="9999"/>
    <lineage>
        <taxon>Eukaryota</taxon>
        <taxon>Metazoa</taxon>
        <taxon>Chordata</taxon>
        <taxon>Craniata</taxon>
        <taxon>Vertebrata</taxon>
        <taxon>Euteleostomi</taxon>
        <taxon>Mammalia</taxon>
        <taxon>Eutheria</taxon>
        <taxon>Euarchontoglires</taxon>
        <taxon>Glires</taxon>
        <taxon>Rodentia</taxon>
        <taxon>Sciuromorpha</taxon>
        <taxon>Sciuridae</taxon>
        <taxon>Xerinae</taxon>
        <taxon>Marmotini</taxon>
        <taxon>Urocitellus</taxon>
    </lineage>
</organism>
<feature type="chain" id="PRO_0000052765" description="Hemoglobin subunit alpha">
    <location>
        <begin position="1"/>
        <end position="141"/>
    </location>
</feature>
<feature type="peptide" id="PRO_0000455946" description="Hemopressin" evidence="2">
    <location>
        <begin position="95"/>
        <end position="103"/>
    </location>
</feature>
<feature type="domain" description="Globin" evidence="4">
    <location>
        <begin position="1"/>
        <end position="141"/>
    </location>
</feature>
<feature type="binding site" evidence="4">
    <location>
        <position position="58"/>
    </location>
    <ligand>
        <name>O2</name>
        <dbReference type="ChEBI" id="CHEBI:15379"/>
    </ligand>
</feature>
<feature type="binding site" description="proximal binding residue" evidence="4">
    <location>
        <position position="87"/>
    </location>
    <ligand>
        <name>heme b</name>
        <dbReference type="ChEBI" id="CHEBI:60344"/>
    </ligand>
    <ligandPart>
        <name>Fe</name>
        <dbReference type="ChEBI" id="CHEBI:18248"/>
    </ligandPart>
</feature>
<feature type="modified residue" description="Phosphoserine" evidence="3">
    <location>
        <position position="3"/>
    </location>
</feature>
<feature type="modified residue" description="N6-succinyllysine" evidence="1">
    <location>
        <position position="7"/>
    </location>
</feature>
<feature type="modified residue" description="Phosphothreonine" evidence="3">
    <location>
        <position position="8"/>
    </location>
</feature>
<feature type="modified residue" description="N6-succinyllysine" evidence="1">
    <location>
        <position position="11"/>
    </location>
</feature>
<feature type="modified residue" description="N6-acetyllysine; alternate" evidence="3">
    <location>
        <position position="16"/>
    </location>
</feature>
<feature type="modified residue" description="N6-succinyllysine; alternate" evidence="1">
    <location>
        <position position="16"/>
    </location>
</feature>
<feature type="modified residue" description="Phosphotyrosine" evidence="3">
    <location>
        <position position="24"/>
    </location>
</feature>
<feature type="modified residue" description="Phosphoserine" evidence="3">
    <location>
        <position position="35"/>
    </location>
</feature>
<feature type="modified residue" description="N6-succinyllysine" evidence="1">
    <location>
        <position position="40"/>
    </location>
</feature>
<feature type="modified residue" description="Phosphoserine" evidence="3">
    <location>
        <position position="49"/>
    </location>
</feature>
<feature type="modified residue" description="Phosphoserine" evidence="1">
    <location>
        <position position="102"/>
    </location>
</feature>
<feature type="modified residue" description="Phosphothreonine" evidence="1">
    <location>
        <position position="108"/>
    </location>
</feature>
<feature type="modified residue" description="Phosphoserine" evidence="1">
    <location>
        <position position="124"/>
    </location>
</feature>
<feature type="modified residue" description="Phosphoserine" evidence="1">
    <location>
        <position position="131"/>
    </location>
</feature>
<feature type="modified residue" description="Phosphothreonine" evidence="1">
    <location>
        <position position="134"/>
    </location>
</feature>
<feature type="modified residue" description="Phosphothreonine" evidence="1">
    <location>
        <position position="137"/>
    </location>
</feature>
<feature type="modified residue" description="Phosphoserine" evidence="1">
    <location>
        <position position="138"/>
    </location>
</feature>
<reference key="1">
    <citation type="journal article" date="1987" name="Comp. Biochem. Physiol.">
        <title>The primary structure of the hemoglobin alpha-chain of the arctic ground squirrel.</title>
        <authorList>
            <person name="Duffy L.K."/>
            <person name="Ehrhardt M.M."/>
            <person name="Genaux C.T."/>
            <person name="Florant G.L."/>
        </authorList>
    </citation>
    <scope>PROTEIN SEQUENCE</scope>
</reference>
<keyword id="KW-0007">Acetylation</keyword>
<keyword id="KW-0903">Direct protein sequencing</keyword>
<keyword id="KW-0349">Heme</keyword>
<keyword id="KW-0408">Iron</keyword>
<keyword id="KW-0479">Metal-binding</keyword>
<keyword id="KW-0561">Oxygen transport</keyword>
<keyword id="KW-0597">Phosphoprotein</keyword>
<keyword id="KW-1185">Reference proteome</keyword>
<keyword id="KW-0813">Transport</keyword>
<gene>
    <name type="primary">HBA</name>
</gene>
<comment type="function">
    <text>Involved in oxygen transport from the lung to the various peripheral tissues.</text>
</comment>
<comment type="function">
    <molecule>Hemopressin</molecule>
    <text evidence="2">Hemopressin acts as an antagonist peptide of the cannabinoid receptor CNR1. Hemopressin-binding efficiently blocks cannabinoid receptor CNR1 and subsequent signaling.</text>
</comment>
<comment type="subunit">
    <text>Heterotetramer of two alpha chains and two beta chains.</text>
</comment>
<comment type="tissue specificity">
    <text>Red blood cells.</text>
</comment>
<comment type="similarity">
    <text evidence="4">Belongs to the globin family.</text>
</comment>